<sequence length="989" mass="114458">MESMKQLKNHNVDLISNNDPLDKNRLLIEDLWESVLREECPNDQANRLMKLKELSYCNQVEEDISRTFKNEIVDIVNSMDLAESISAARAFSLYFQLVNILEQRVEEDRYIQSFTNKNNQKSHDNLDPFAPALARQNAPVTFRELFYRLRKLNVPPGKLEELLQEMDIRLVFTAHPTEIVRHTIRHKQTRVANLLQKIQVEKFLTVEDIKSLKIQLKEEIRLWWRTDELHQFKPSVIDEVDYALHYFQQVLFNAMPQLRGRISSALTENYPDVQMPTESFCTFGSWVGSDRDGNPSVTPEITWRTACYQRKLMLERYISATSNLRDQLSVSMQWSQVSSSLLESLETDRVQFPEIYEARATRYRSEPYRLKLSYILEKLRLTKERNNLLAEAGWKFSLERESDNKNIELVEKLHYRSVDEFTYDLELIKNSLNSTDLTCEAVSKLLTQVHIFGFSLASLDIRQESTRHSDAIQELTNYLELPKKYDQMPEIERIEWLKDELNTKRPLIPAEVSWTKSTEETFSVFKMVKRLQEEFGSRICHSYVISMSHSASDLLEVLLLAKEMGLIDQSSQKSKLLVVPLFETVEDLKRAPEVMEQLFQLDFYRSLLPKVGERFKPIQELMLGYSDSNKDSGFLSSNWEIHRAQIALQNLSSKNNILLRLFHGRGGSVGRGGGPAYQAILAQPSGTLKGRIKITEQGEVLASKYSLPELALYNLETVTTAVIQNSLVINRLDATPEWNDLMTRLAETSRIQYRKLVHENPNLLTFFQEVTPIEEISKLQISSRPARRKKGAKDLSSLRAIPWVFGWTQSRFLLPSWFGVGTALSVELKSDPEQIELLRVLHQRWPFFRMLISKVEMTLSKVDLEVAKYYVDTLGSKENAKSFGDIFDVISKEYNLTKSLVLEITGKNKLLESDRDLRLSVNLRNKTIIPLGFLQVSLLRRLRDQTRQPPISEFLNERNESERAYSRSELLRGALLTINGIAAGMRNTG</sequence>
<dbReference type="EC" id="4.1.1.31" evidence="1"/>
<dbReference type="EMBL" id="CP000552">
    <property type="protein sequence ID" value="ABM72969.1"/>
    <property type="molecule type" value="Genomic_DNA"/>
</dbReference>
<dbReference type="RefSeq" id="WP_011821055.1">
    <property type="nucleotide sequence ID" value="NC_008817.1"/>
</dbReference>
<dbReference type="SMR" id="A2BYV8"/>
<dbReference type="STRING" id="167542.P9515_17621"/>
<dbReference type="GeneID" id="60201576"/>
<dbReference type="KEGG" id="pmc:P9515_17621"/>
<dbReference type="eggNOG" id="COG2352">
    <property type="taxonomic scope" value="Bacteria"/>
</dbReference>
<dbReference type="HOGENOM" id="CLU_006557_2_0_3"/>
<dbReference type="OrthoDB" id="9768133at2"/>
<dbReference type="Proteomes" id="UP000001589">
    <property type="component" value="Chromosome"/>
</dbReference>
<dbReference type="GO" id="GO:0005829">
    <property type="term" value="C:cytosol"/>
    <property type="evidence" value="ECO:0007669"/>
    <property type="project" value="TreeGrafter"/>
</dbReference>
<dbReference type="GO" id="GO:0000287">
    <property type="term" value="F:magnesium ion binding"/>
    <property type="evidence" value="ECO:0007669"/>
    <property type="project" value="UniProtKB-UniRule"/>
</dbReference>
<dbReference type="GO" id="GO:0008964">
    <property type="term" value="F:phosphoenolpyruvate carboxylase activity"/>
    <property type="evidence" value="ECO:0007669"/>
    <property type="project" value="UniProtKB-UniRule"/>
</dbReference>
<dbReference type="GO" id="GO:0015977">
    <property type="term" value="P:carbon fixation"/>
    <property type="evidence" value="ECO:0007669"/>
    <property type="project" value="UniProtKB-UniRule"/>
</dbReference>
<dbReference type="GO" id="GO:0006107">
    <property type="term" value="P:oxaloacetate metabolic process"/>
    <property type="evidence" value="ECO:0007669"/>
    <property type="project" value="UniProtKB-UniRule"/>
</dbReference>
<dbReference type="GO" id="GO:0006099">
    <property type="term" value="P:tricarboxylic acid cycle"/>
    <property type="evidence" value="ECO:0007669"/>
    <property type="project" value="InterPro"/>
</dbReference>
<dbReference type="Gene3D" id="1.20.1440.90">
    <property type="entry name" value="Phosphoenolpyruvate/pyruvate domain"/>
    <property type="match status" value="1"/>
</dbReference>
<dbReference type="HAMAP" id="MF_00595">
    <property type="entry name" value="PEPcase_type1"/>
    <property type="match status" value="1"/>
</dbReference>
<dbReference type="InterPro" id="IPR021135">
    <property type="entry name" value="PEP_COase"/>
</dbReference>
<dbReference type="InterPro" id="IPR022805">
    <property type="entry name" value="PEP_COase_bac/pln-type"/>
</dbReference>
<dbReference type="InterPro" id="IPR018129">
    <property type="entry name" value="PEP_COase_Lys_AS"/>
</dbReference>
<dbReference type="InterPro" id="IPR033129">
    <property type="entry name" value="PEPCASE_His_AS"/>
</dbReference>
<dbReference type="InterPro" id="IPR015813">
    <property type="entry name" value="Pyrv/PenolPyrv_kinase-like_dom"/>
</dbReference>
<dbReference type="NCBIfam" id="NF000584">
    <property type="entry name" value="PRK00009.1"/>
    <property type="match status" value="1"/>
</dbReference>
<dbReference type="PANTHER" id="PTHR30523">
    <property type="entry name" value="PHOSPHOENOLPYRUVATE CARBOXYLASE"/>
    <property type="match status" value="1"/>
</dbReference>
<dbReference type="PANTHER" id="PTHR30523:SF6">
    <property type="entry name" value="PHOSPHOENOLPYRUVATE CARBOXYLASE"/>
    <property type="match status" value="1"/>
</dbReference>
<dbReference type="Pfam" id="PF00311">
    <property type="entry name" value="PEPcase"/>
    <property type="match status" value="1"/>
</dbReference>
<dbReference type="PRINTS" id="PR00150">
    <property type="entry name" value="PEPCARBXLASE"/>
</dbReference>
<dbReference type="SUPFAM" id="SSF51621">
    <property type="entry name" value="Phosphoenolpyruvate/pyruvate domain"/>
    <property type="match status" value="1"/>
</dbReference>
<dbReference type="PROSITE" id="PS00781">
    <property type="entry name" value="PEPCASE_1"/>
    <property type="match status" value="1"/>
</dbReference>
<dbReference type="PROSITE" id="PS00393">
    <property type="entry name" value="PEPCASE_2"/>
    <property type="match status" value="1"/>
</dbReference>
<gene>
    <name evidence="1" type="primary">ppc</name>
    <name type="ordered locus">P9515_17621</name>
</gene>
<accession>A2BYV8</accession>
<comment type="function">
    <text evidence="1">Forms oxaloacetate, a four-carbon dicarboxylic acid source for the tricarboxylic acid cycle.</text>
</comment>
<comment type="catalytic activity">
    <reaction evidence="1">
        <text>oxaloacetate + phosphate = phosphoenolpyruvate + hydrogencarbonate</text>
        <dbReference type="Rhea" id="RHEA:28370"/>
        <dbReference type="ChEBI" id="CHEBI:16452"/>
        <dbReference type="ChEBI" id="CHEBI:17544"/>
        <dbReference type="ChEBI" id="CHEBI:43474"/>
        <dbReference type="ChEBI" id="CHEBI:58702"/>
        <dbReference type="EC" id="4.1.1.31"/>
    </reaction>
</comment>
<comment type="cofactor">
    <cofactor evidence="1">
        <name>Mg(2+)</name>
        <dbReference type="ChEBI" id="CHEBI:18420"/>
    </cofactor>
</comment>
<comment type="similarity">
    <text evidence="1">Belongs to the PEPCase type 1 family.</text>
</comment>
<feature type="chain" id="PRO_1000025571" description="Phosphoenolpyruvate carboxylase">
    <location>
        <begin position="1"/>
        <end position="989"/>
    </location>
</feature>
<feature type="active site" evidence="1">
    <location>
        <position position="175"/>
    </location>
</feature>
<feature type="active site" evidence="1">
    <location>
        <position position="630"/>
    </location>
</feature>
<protein>
    <recommendedName>
        <fullName evidence="1">Phosphoenolpyruvate carboxylase</fullName>
        <shortName evidence="1">PEPC</shortName>
        <shortName evidence="1">PEPCase</shortName>
        <ecNumber evidence="1">4.1.1.31</ecNumber>
    </recommendedName>
</protein>
<proteinExistence type="inferred from homology"/>
<keyword id="KW-0120">Carbon dioxide fixation</keyword>
<keyword id="KW-0456">Lyase</keyword>
<keyword id="KW-0460">Magnesium</keyword>
<organism>
    <name type="scientific">Prochlorococcus marinus (strain MIT 9515)</name>
    <dbReference type="NCBI Taxonomy" id="167542"/>
    <lineage>
        <taxon>Bacteria</taxon>
        <taxon>Bacillati</taxon>
        <taxon>Cyanobacteriota</taxon>
        <taxon>Cyanophyceae</taxon>
        <taxon>Synechococcales</taxon>
        <taxon>Prochlorococcaceae</taxon>
        <taxon>Prochlorococcus</taxon>
    </lineage>
</organism>
<evidence type="ECO:0000255" key="1">
    <source>
        <dbReference type="HAMAP-Rule" id="MF_00595"/>
    </source>
</evidence>
<reference key="1">
    <citation type="journal article" date="2007" name="PLoS Genet.">
        <title>Patterns and implications of gene gain and loss in the evolution of Prochlorococcus.</title>
        <authorList>
            <person name="Kettler G.C."/>
            <person name="Martiny A.C."/>
            <person name="Huang K."/>
            <person name="Zucker J."/>
            <person name="Coleman M.L."/>
            <person name="Rodrigue S."/>
            <person name="Chen F."/>
            <person name="Lapidus A."/>
            <person name="Ferriera S."/>
            <person name="Johnson J."/>
            <person name="Steglich C."/>
            <person name="Church G.M."/>
            <person name="Richardson P."/>
            <person name="Chisholm S.W."/>
        </authorList>
    </citation>
    <scope>NUCLEOTIDE SEQUENCE [LARGE SCALE GENOMIC DNA]</scope>
    <source>
        <strain>MIT 9515</strain>
    </source>
</reference>
<name>CAPP_PROM5</name>